<accession>Q0TQZ2</accession>
<protein>
    <recommendedName>
        <fullName evidence="1">Enolase</fullName>
        <ecNumber evidence="1">4.2.1.11</ecNumber>
    </recommendedName>
    <alternativeName>
        <fullName evidence="1">2-phospho-D-glycerate hydro-lyase</fullName>
    </alternativeName>
    <alternativeName>
        <fullName evidence="1">2-phosphoglycerate dehydratase</fullName>
    </alternativeName>
</protein>
<keyword id="KW-0963">Cytoplasm</keyword>
<keyword id="KW-0324">Glycolysis</keyword>
<keyword id="KW-0456">Lyase</keyword>
<keyword id="KW-0460">Magnesium</keyword>
<keyword id="KW-0479">Metal-binding</keyword>
<keyword id="KW-0964">Secreted</keyword>
<sequence>MKQYIEIIDVVARQILDSRCFPTVEVEVYLEDGTVGRAAVPSGASTGIYEAVELRDGDKDKYLGKGVEKAVANVNDTIAEEIIGLNVLDQAYIDKTLIELDGTKNKGKLGANAILGVSLAVAQAAANYLGMPLYQYIGGVNAKVLPVPMMNIINGGSHADNSVDIQEFMIMPVGFDCFERAVRACAEVYHALKKTLNSKGYSTGVGDEGGFAPNLKSNAEAIEVILEAIEKAGYEPGKEFFIAIDAASSEYYKDGKYVLEHEGKTLTAAEMVDFFEDWVNKYPIISIEDGMAEEDWEGWKLMTERLGKKVQLVGDDLFVTNTERLKTGIEKGIANSILIKLNQIGTLTETLNAIEMANRAGYTAVVSHRSGETEDTTIADLVVAVNAGQIKTGAPARSERVAKYNQLIRINEELGEVAEYRGRNAFFNLSK</sequence>
<comment type="function">
    <text evidence="1">Catalyzes the reversible conversion of 2-phosphoglycerate (2-PG) into phosphoenolpyruvate (PEP). It is essential for the degradation of carbohydrates via glycolysis.</text>
</comment>
<comment type="catalytic activity">
    <reaction evidence="1">
        <text>(2R)-2-phosphoglycerate = phosphoenolpyruvate + H2O</text>
        <dbReference type="Rhea" id="RHEA:10164"/>
        <dbReference type="ChEBI" id="CHEBI:15377"/>
        <dbReference type="ChEBI" id="CHEBI:58289"/>
        <dbReference type="ChEBI" id="CHEBI:58702"/>
        <dbReference type="EC" id="4.2.1.11"/>
    </reaction>
</comment>
<comment type="cofactor">
    <cofactor evidence="1">
        <name>Mg(2+)</name>
        <dbReference type="ChEBI" id="CHEBI:18420"/>
    </cofactor>
    <text evidence="1">Binds a second Mg(2+) ion via substrate during catalysis.</text>
</comment>
<comment type="pathway">
    <text evidence="1">Carbohydrate degradation; glycolysis; pyruvate from D-glyceraldehyde 3-phosphate: step 4/5.</text>
</comment>
<comment type="subcellular location">
    <subcellularLocation>
        <location evidence="1">Cytoplasm</location>
    </subcellularLocation>
    <subcellularLocation>
        <location evidence="1">Secreted</location>
    </subcellularLocation>
    <subcellularLocation>
        <location evidence="1">Cell surface</location>
    </subcellularLocation>
    <text evidence="1">Fractions of enolase are present in both the cytoplasm and on the cell surface.</text>
</comment>
<comment type="similarity">
    <text evidence="1">Belongs to the enolase family.</text>
</comment>
<proteinExistence type="inferred from homology"/>
<gene>
    <name evidence="1" type="primary">eno</name>
    <name type="ordered locus">CPF_1505</name>
</gene>
<evidence type="ECO:0000255" key="1">
    <source>
        <dbReference type="HAMAP-Rule" id="MF_00318"/>
    </source>
</evidence>
<dbReference type="EC" id="4.2.1.11" evidence="1"/>
<dbReference type="EMBL" id="CP000246">
    <property type="protein sequence ID" value="ABG82939.1"/>
    <property type="molecule type" value="Genomic_DNA"/>
</dbReference>
<dbReference type="RefSeq" id="WP_003460354.1">
    <property type="nucleotide sequence ID" value="NC_008261.1"/>
</dbReference>
<dbReference type="SMR" id="Q0TQZ2"/>
<dbReference type="STRING" id="195103.CPF_1505"/>
<dbReference type="PaxDb" id="195103-CPF_1505"/>
<dbReference type="GeneID" id="93002167"/>
<dbReference type="KEGG" id="cpf:CPF_1505"/>
<dbReference type="eggNOG" id="COG0148">
    <property type="taxonomic scope" value="Bacteria"/>
</dbReference>
<dbReference type="HOGENOM" id="CLU_031223_2_1_9"/>
<dbReference type="UniPathway" id="UPA00109">
    <property type="reaction ID" value="UER00187"/>
</dbReference>
<dbReference type="Proteomes" id="UP000001823">
    <property type="component" value="Chromosome"/>
</dbReference>
<dbReference type="GO" id="GO:0009986">
    <property type="term" value="C:cell surface"/>
    <property type="evidence" value="ECO:0007669"/>
    <property type="project" value="UniProtKB-SubCell"/>
</dbReference>
<dbReference type="GO" id="GO:0005576">
    <property type="term" value="C:extracellular region"/>
    <property type="evidence" value="ECO:0007669"/>
    <property type="project" value="UniProtKB-SubCell"/>
</dbReference>
<dbReference type="GO" id="GO:0000015">
    <property type="term" value="C:phosphopyruvate hydratase complex"/>
    <property type="evidence" value="ECO:0007669"/>
    <property type="project" value="InterPro"/>
</dbReference>
<dbReference type="GO" id="GO:0000287">
    <property type="term" value="F:magnesium ion binding"/>
    <property type="evidence" value="ECO:0007669"/>
    <property type="project" value="UniProtKB-UniRule"/>
</dbReference>
<dbReference type="GO" id="GO:0004634">
    <property type="term" value="F:phosphopyruvate hydratase activity"/>
    <property type="evidence" value="ECO:0007669"/>
    <property type="project" value="UniProtKB-UniRule"/>
</dbReference>
<dbReference type="GO" id="GO:0006096">
    <property type="term" value="P:glycolytic process"/>
    <property type="evidence" value="ECO:0007669"/>
    <property type="project" value="UniProtKB-UniRule"/>
</dbReference>
<dbReference type="CDD" id="cd03313">
    <property type="entry name" value="enolase"/>
    <property type="match status" value="1"/>
</dbReference>
<dbReference type="FunFam" id="3.20.20.120:FF:000001">
    <property type="entry name" value="Enolase"/>
    <property type="match status" value="1"/>
</dbReference>
<dbReference type="FunFam" id="3.30.390.10:FF:000001">
    <property type="entry name" value="Enolase"/>
    <property type="match status" value="1"/>
</dbReference>
<dbReference type="Gene3D" id="3.20.20.120">
    <property type="entry name" value="Enolase-like C-terminal domain"/>
    <property type="match status" value="1"/>
</dbReference>
<dbReference type="Gene3D" id="3.30.390.10">
    <property type="entry name" value="Enolase-like, N-terminal domain"/>
    <property type="match status" value="1"/>
</dbReference>
<dbReference type="HAMAP" id="MF_00318">
    <property type="entry name" value="Enolase"/>
    <property type="match status" value="1"/>
</dbReference>
<dbReference type="InterPro" id="IPR000941">
    <property type="entry name" value="Enolase"/>
</dbReference>
<dbReference type="InterPro" id="IPR036849">
    <property type="entry name" value="Enolase-like_C_sf"/>
</dbReference>
<dbReference type="InterPro" id="IPR029017">
    <property type="entry name" value="Enolase-like_N"/>
</dbReference>
<dbReference type="InterPro" id="IPR020810">
    <property type="entry name" value="Enolase_C"/>
</dbReference>
<dbReference type="InterPro" id="IPR020809">
    <property type="entry name" value="Enolase_CS"/>
</dbReference>
<dbReference type="InterPro" id="IPR020811">
    <property type="entry name" value="Enolase_N"/>
</dbReference>
<dbReference type="NCBIfam" id="TIGR01060">
    <property type="entry name" value="eno"/>
    <property type="match status" value="1"/>
</dbReference>
<dbReference type="PANTHER" id="PTHR11902">
    <property type="entry name" value="ENOLASE"/>
    <property type="match status" value="1"/>
</dbReference>
<dbReference type="PANTHER" id="PTHR11902:SF1">
    <property type="entry name" value="ENOLASE"/>
    <property type="match status" value="1"/>
</dbReference>
<dbReference type="Pfam" id="PF00113">
    <property type="entry name" value="Enolase_C"/>
    <property type="match status" value="1"/>
</dbReference>
<dbReference type="Pfam" id="PF03952">
    <property type="entry name" value="Enolase_N"/>
    <property type="match status" value="1"/>
</dbReference>
<dbReference type="PIRSF" id="PIRSF001400">
    <property type="entry name" value="Enolase"/>
    <property type="match status" value="1"/>
</dbReference>
<dbReference type="PRINTS" id="PR00148">
    <property type="entry name" value="ENOLASE"/>
</dbReference>
<dbReference type="SFLD" id="SFLDS00001">
    <property type="entry name" value="Enolase"/>
    <property type="match status" value="1"/>
</dbReference>
<dbReference type="SFLD" id="SFLDF00002">
    <property type="entry name" value="enolase"/>
    <property type="match status" value="1"/>
</dbReference>
<dbReference type="SMART" id="SM01192">
    <property type="entry name" value="Enolase_C"/>
    <property type="match status" value="1"/>
</dbReference>
<dbReference type="SMART" id="SM01193">
    <property type="entry name" value="Enolase_N"/>
    <property type="match status" value="1"/>
</dbReference>
<dbReference type="SUPFAM" id="SSF51604">
    <property type="entry name" value="Enolase C-terminal domain-like"/>
    <property type="match status" value="1"/>
</dbReference>
<dbReference type="SUPFAM" id="SSF54826">
    <property type="entry name" value="Enolase N-terminal domain-like"/>
    <property type="match status" value="1"/>
</dbReference>
<dbReference type="PROSITE" id="PS00164">
    <property type="entry name" value="ENOLASE"/>
    <property type="match status" value="1"/>
</dbReference>
<organism>
    <name type="scientific">Clostridium perfringens (strain ATCC 13124 / DSM 756 / JCM 1290 / NCIMB 6125 / NCTC 8237 / Type A)</name>
    <dbReference type="NCBI Taxonomy" id="195103"/>
    <lineage>
        <taxon>Bacteria</taxon>
        <taxon>Bacillati</taxon>
        <taxon>Bacillota</taxon>
        <taxon>Clostridia</taxon>
        <taxon>Eubacteriales</taxon>
        <taxon>Clostridiaceae</taxon>
        <taxon>Clostridium</taxon>
    </lineage>
</organism>
<name>ENO_CLOP1</name>
<feature type="chain" id="PRO_0000267019" description="Enolase">
    <location>
        <begin position="1"/>
        <end position="431"/>
    </location>
</feature>
<feature type="active site" description="Proton donor" evidence="1">
    <location>
        <position position="208"/>
    </location>
</feature>
<feature type="active site" description="Proton acceptor" evidence="1">
    <location>
        <position position="340"/>
    </location>
</feature>
<feature type="binding site" evidence="1">
    <location>
        <position position="166"/>
    </location>
    <ligand>
        <name>(2R)-2-phosphoglycerate</name>
        <dbReference type="ChEBI" id="CHEBI:58289"/>
    </ligand>
</feature>
<feature type="binding site" evidence="1">
    <location>
        <position position="245"/>
    </location>
    <ligand>
        <name>Mg(2+)</name>
        <dbReference type="ChEBI" id="CHEBI:18420"/>
    </ligand>
</feature>
<feature type="binding site" evidence="1">
    <location>
        <position position="288"/>
    </location>
    <ligand>
        <name>Mg(2+)</name>
        <dbReference type="ChEBI" id="CHEBI:18420"/>
    </ligand>
</feature>
<feature type="binding site" evidence="1">
    <location>
        <position position="315"/>
    </location>
    <ligand>
        <name>Mg(2+)</name>
        <dbReference type="ChEBI" id="CHEBI:18420"/>
    </ligand>
</feature>
<feature type="binding site" evidence="1">
    <location>
        <position position="340"/>
    </location>
    <ligand>
        <name>(2R)-2-phosphoglycerate</name>
        <dbReference type="ChEBI" id="CHEBI:58289"/>
    </ligand>
</feature>
<feature type="binding site" evidence="1">
    <location>
        <position position="369"/>
    </location>
    <ligand>
        <name>(2R)-2-phosphoglycerate</name>
        <dbReference type="ChEBI" id="CHEBI:58289"/>
    </ligand>
</feature>
<feature type="binding site" evidence="1">
    <location>
        <position position="370"/>
    </location>
    <ligand>
        <name>(2R)-2-phosphoglycerate</name>
        <dbReference type="ChEBI" id="CHEBI:58289"/>
    </ligand>
</feature>
<feature type="binding site" evidence="1">
    <location>
        <position position="391"/>
    </location>
    <ligand>
        <name>(2R)-2-phosphoglycerate</name>
        <dbReference type="ChEBI" id="CHEBI:58289"/>
    </ligand>
</feature>
<reference key="1">
    <citation type="journal article" date="2006" name="Genome Res.">
        <title>Skewed genomic variability in strains of the toxigenic bacterial pathogen, Clostridium perfringens.</title>
        <authorList>
            <person name="Myers G.S.A."/>
            <person name="Rasko D.A."/>
            <person name="Cheung J.K."/>
            <person name="Ravel J."/>
            <person name="Seshadri R."/>
            <person name="DeBoy R.T."/>
            <person name="Ren Q."/>
            <person name="Varga J."/>
            <person name="Awad M.M."/>
            <person name="Brinkac L.M."/>
            <person name="Daugherty S.C."/>
            <person name="Haft D.H."/>
            <person name="Dodson R.J."/>
            <person name="Madupu R."/>
            <person name="Nelson W.C."/>
            <person name="Rosovitz M.J."/>
            <person name="Sullivan S.A."/>
            <person name="Khouri H."/>
            <person name="Dimitrov G.I."/>
            <person name="Watkins K.L."/>
            <person name="Mulligan S."/>
            <person name="Benton J."/>
            <person name="Radune D."/>
            <person name="Fisher D.J."/>
            <person name="Atkins H.S."/>
            <person name="Hiscox T."/>
            <person name="Jost B.H."/>
            <person name="Billington S.J."/>
            <person name="Songer J.G."/>
            <person name="McClane B.A."/>
            <person name="Titball R.W."/>
            <person name="Rood J.I."/>
            <person name="Melville S.B."/>
            <person name="Paulsen I.T."/>
        </authorList>
    </citation>
    <scope>NUCLEOTIDE SEQUENCE [LARGE SCALE GENOMIC DNA]</scope>
    <source>
        <strain>ATCC 13124 / DSM 756 / JCM 1290 / NCIMB 6125 / NCTC 8237 / S 107 / Type A</strain>
    </source>
</reference>